<feature type="chain" id="PRO_0000293354" description="Small ribosomal subunit protein uS4">
    <location>
        <begin position="1"/>
        <end position="205"/>
    </location>
</feature>
<feature type="domain" description="S4 RNA-binding" evidence="1">
    <location>
        <begin position="94"/>
        <end position="157"/>
    </location>
</feature>
<feature type="region of interest" description="Disordered" evidence="2">
    <location>
        <begin position="18"/>
        <end position="46"/>
    </location>
</feature>
<sequence>MTKRSEAKYKIDRRMGQNIWGRPKSPVNRREYGPGQHGQRRKGKLSDFGVQLRAKQKLKGYYANISERQFHAIYVEATRLKGDSGENLIGLLERRLDTVVYRSKFVSTMFAARQFINHGHIKVNGKRVNISSYKVRVGDVIEVKEASKQLAIVLEANQLAERDVPDYIDVDHNKMTAKFGRIPALSDVPFAVQMEPHLIVEFYSR</sequence>
<gene>
    <name evidence="1" type="primary">rpsD</name>
    <name type="ordered locus">RPD_1765</name>
</gene>
<keyword id="KW-0687">Ribonucleoprotein</keyword>
<keyword id="KW-0689">Ribosomal protein</keyword>
<keyword id="KW-0694">RNA-binding</keyword>
<keyword id="KW-0699">rRNA-binding</keyword>
<reference key="1">
    <citation type="submission" date="2006-03" db="EMBL/GenBank/DDBJ databases">
        <title>Complete sequence of Rhodopseudomonas palustris BisB5.</title>
        <authorList>
            <consortium name="US DOE Joint Genome Institute"/>
            <person name="Copeland A."/>
            <person name="Lucas S."/>
            <person name="Lapidus A."/>
            <person name="Barry K."/>
            <person name="Detter J.C."/>
            <person name="Glavina del Rio T."/>
            <person name="Hammon N."/>
            <person name="Israni S."/>
            <person name="Dalin E."/>
            <person name="Tice H."/>
            <person name="Pitluck S."/>
            <person name="Chain P."/>
            <person name="Malfatti S."/>
            <person name="Shin M."/>
            <person name="Vergez L."/>
            <person name="Schmutz J."/>
            <person name="Larimer F."/>
            <person name="Land M."/>
            <person name="Hauser L."/>
            <person name="Pelletier D.A."/>
            <person name="Kyrpides N."/>
            <person name="Lykidis A."/>
            <person name="Oda Y."/>
            <person name="Harwood C.S."/>
            <person name="Richardson P."/>
        </authorList>
    </citation>
    <scope>NUCLEOTIDE SEQUENCE [LARGE SCALE GENOMIC DNA]</scope>
    <source>
        <strain>BisB5</strain>
    </source>
</reference>
<comment type="function">
    <text evidence="1">One of the primary rRNA binding proteins, it binds directly to 16S rRNA where it nucleates assembly of the body of the 30S subunit.</text>
</comment>
<comment type="function">
    <text evidence="1">With S5 and S12 plays an important role in translational accuracy.</text>
</comment>
<comment type="subunit">
    <text evidence="1">Part of the 30S ribosomal subunit. Contacts protein S5. The interaction surface between S4 and S5 is involved in control of translational fidelity.</text>
</comment>
<comment type="similarity">
    <text evidence="1">Belongs to the universal ribosomal protein uS4 family.</text>
</comment>
<protein>
    <recommendedName>
        <fullName evidence="1">Small ribosomal subunit protein uS4</fullName>
    </recommendedName>
    <alternativeName>
        <fullName evidence="3">30S ribosomal protein S4</fullName>
    </alternativeName>
</protein>
<evidence type="ECO:0000255" key="1">
    <source>
        <dbReference type="HAMAP-Rule" id="MF_01306"/>
    </source>
</evidence>
<evidence type="ECO:0000256" key="2">
    <source>
        <dbReference type="SAM" id="MobiDB-lite"/>
    </source>
</evidence>
<evidence type="ECO:0000305" key="3"/>
<accession>Q13A88</accession>
<name>RS4_RHOPS</name>
<organism>
    <name type="scientific">Rhodopseudomonas palustris (strain BisB5)</name>
    <dbReference type="NCBI Taxonomy" id="316057"/>
    <lineage>
        <taxon>Bacteria</taxon>
        <taxon>Pseudomonadati</taxon>
        <taxon>Pseudomonadota</taxon>
        <taxon>Alphaproteobacteria</taxon>
        <taxon>Hyphomicrobiales</taxon>
        <taxon>Nitrobacteraceae</taxon>
        <taxon>Rhodopseudomonas</taxon>
    </lineage>
</organism>
<proteinExistence type="inferred from homology"/>
<dbReference type="EMBL" id="CP000283">
    <property type="protein sequence ID" value="ABE39001.1"/>
    <property type="molecule type" value="Genomic_DNA"/>
</dbReference>
<dbReference type="SMR" id="Q13A88"/>
<dbReference type="STRING" id="316057.RPD_1765"/>
<dbReference type="KEGG" id="rpd:RPD_1765"/>
<dbReference type="eggNOG" id="COG0522">
    <property type="taxonomic scope" value="Bacteria"/>
</dbReference>
<dbReference type="HOGENOM" id="CLU_092403_0_0_5"/>
<dbReference type="BioCyc" id="RPAL316057:RPD_RS08880-MONOMER"/>
<dbReference type="Proteomes" id="UP000001818">
    <property type="component" value="Chromosome"/>
</dbReference>
<dbReference type="GO" id="GO:0015935">
    <property type="term" value="C:small ribosomal subunit"/>
    <property type="evidence" value="ECO:0007669"/>
    <property type="project" value="InterPro"/>
</dbReference>
<dbReference type="GO" id="GO:0019843">
    <property type="term" value="F:rRNA binding"/>
    <property type="evidence" value="ECO:0007669"/>
    <property type="project" value="UniProtKB-UniRule"/>
</dbReference>
<dbReference type="GO" id="GO:0003735">
    <property type="term" value="F:structural constituent of ribosome"/>
    <property type="evidence" value="ECO:0007669"/>
    <property type="project" value="InterPro"/>
</dbReference>
<dbReference type="GO" id="GO:0042274">
    <property type="term" value="P:ribosomal small subunit biogenesis"/>
    <property type="evidence" value="ECO:0007669"/>
    <property type="project" value="TreeGrafter"/>
</dbReference>
<dbReference type="GO" id="GO:0006412">
    <property type="term" value="P:translation"/>
    <property type="evidence" value="ECO:0007669"/>
    <property type="project" value="UniProtKB-UniRule"/>
</dbReference>
<dbReference type="CDD" id="cd00165">
    <property type="entry name" value="S4"/>
    <property type="match status" value="1"/>
</dbReference>
<dbReference type="FunFam" id="3.10.290.10:FF:000001">
    <property type="entry name" value="30S ribosomal protein S4"/>
    <property type="match status" value="1"/>
</dbReference>
<dbReference type="Gene3D" id="1.10.1050.10">
    <property type="entry name" value="Ribosomal Protein S4 Delta 41, Chain A, domain 1"/>
    <property type="match status" value="1"/>
</dbReference>
<dbReference type="Gene3D" id="3.10.290.10">
    <property type="entry name" value="RNA-binding S4 domain"/>
    <property type="match status" value="1"/>
</dbReference>
<dbReference type="HAMAP" id="MF_01306_B">
    <property type="entry name" value="Ribosomal_uS4_B"/>
    <property type="match status" value="1"/>
</dbReference>
<dbReference type="InterPro" id="IPR022801">
    <property type="entry name" value="Ribosomal_uS4"/>
</dbReference>
<dbReference type="InterPro" id="IPR005709">
    <property type="entry name" value="Ribosomal_uS4_bac-type"/>
</dbReference>
<dbReference type="InterPro" id="IPR018079">
    <property type="entry name" value="Ribosomal_uS4_CS"/>
</dbReference>
<dbReference type="InterPro" id="IPR001912">
    <property type="entry name" value="Ribosomal_uS4_N"/>
</dbReference>
<dbReference type="InterPro" id="IPR002942">
    <property type="entry name" value="S4_RNA-bd"/>
</dbReference>
<dbReference type="InterPro" id="IPR036986">
    <property type="entry name" value="S4_RNA-bd_sf"/>
</dbReference>
<dbReference type="NCBIfam" id="NF003717">
    <property type="entry name" value="PRK05327.1"/>
    <property type="match status" value="1"/>
</dbReference>
<dbReference type="NCBIfam" id="TIGR01017">
    <property type="entry name" value="rpsD_bact"/>
    <property type="match status" value="1"/>
</dbReference>
<dbReference type="PANTHER" id="PTHR11831">
    <property type="entry name" value="30S 40S RIBOSOMAL PROTEIN"/>
    <property type="match status" value="1"/>
</dbReference>
<dbReference type="PANTHER" id="PTHR11831:SF4">
    <property type="entry name" value="SMALL RIBOSOMAL SUBUNIT PROTEIN US4M"/>
    <property type="match status" value="1"/>
</dbReference>
<dbReference type="Pfam" id="PF00163">
    <property type="entry name" value="Ribosomal_S4"/>
    <property type="match status" value="1"/>
</dbReference>
<dbReference type="Pfam" id="PF01479">
    <property type="entry name" value="S4"/>
    <property type="match status" value="1"/>
</dbReference>
<dbReference type="SMART" id="SM01390">
    <property type="entry name" value="Ribosomal_S4"/>
    <property type="match status" value="1"/>
</dbReference>
<dbReference type="SMART" id="SM00363">
    <property type="entry name" value="S4"/>
    <property type="match status" value="1"/>
</dbReference>
<dbReference type="SUPFAM" id="SSF55174">
    <property type="entry name" value="Alpha-L RNA-binding motif"/>
    <property type="match status" value="1"/>
</dbReference>
<dbReference type="PROSITE" id="PS00632">
    <property type="entry name" value="RIBOSOMAL_S4"/>
    <property type="match status" value="1"/>
</dbReference>
<dbReference type="PROSITE" id="PS50889">
    <property type="entry name" value="S4"/>
    <property type="match status" value="1"/>
</dbReference>